<feature type="chain" id="PRO_0000411289" description="ATP synthase subunit delta">
    <location>
        <begin position="1"/>
        <end position="178"/>
    </location>
</feature>
<protein>
    <recommendedName>
        <fullName evidence="1">ATP synthase subunit delta</fullName>
    </recommendedName>
    <alternativeName>
        <fullName evidence="1">ATP synthase F(1) sector subunit delta</fullName>
    </alternativeName>
    <alternativeName>
        <fullName evidence="1">F-type ATPase subunit delta</fullName>
        <shortName evidence="1">F-ATPase subunit delta</shortName>
    </alternativeName>
</protein>
<evidence type="ECO:0000255" key="1">
    <source>
        <dbReference type="HAMAP-Rule" id="MF_01416"/>
    </source>
</evidence>
<accession>P0CZ95</accession>
<accession>Q878H3</accession>
<accession>Q8K828</accession>
<sequence>MTKKEQALIEQYAKSLVEVASEHHSLDTLQADVLAILETFETTNLDQSLSSLAVPHAEKIKLLTLLKGNNSVYMNNFLNLILQNEREAYLYQMLQAVLNEIAIVSNQYDVTVTSSLPLTEEQKSRVRAVVAKKFAVTAGRLIEKVDPSLIGGFIISVNNKVIDTSIRRQLQAFKMNLK</sequence>
<keyword id="KW-0066">ATP synthesis</keyword>
<keyword id="KW-1003">Cell membrane</keyword>
<keyword id="KW-0139">CF(1)</keyword>
<keyword id="KW-0375">Hydrogen ion transport</keyword>
<keyword id="KW-0406">Ion transport</keyword>
<keyword id="KW-0472">Membrane</keyword>
<keyword id="KW-0813">Transport</keyword>
<comment type="function">
    <text evidence="1">F(1)F(0) ATP synthase produces ATP from ADP in the presence of a proton or sodium gradient. F-type ATPases consist of two structural domains, F(1) containing the extramembraneous catalytic core and F(0) containing the membrane proton channel, linked together by a central stalk and a peripheral stalk. During catalysis, ATP synthesis in the catalytic domain of F(1) is coupled via a rotary mechanism of the central stalk subunits to proton translocation.</text>
</comment>
<comment type="function">
    <text evidence="1">This protein is part of the stalk that links CF(0) to CF(1). It either transmits conformational changes from CF(0) to CF(1) or is implicated in proton conduction.</text>
</comment>
<comment type="subunit">
    <text evidence="1">F-type ATPases have 2 components, F(1) - the catalytic core - and F(0) - the membrane proton channel. F(1) has five subunits: alpha(3), beta(3), gamma(1), delta(1), epsilon(1). F(0) has three main subunits: a(1), b(2) and c(10-14). The alpha and beta chains form an alternating ring which encloses part of the gamma chain. F(1) is attached to F(0) by a central stalk formed by the gamma and epsilon chains, while a peripheral stalk is formed by the delta and b chains.</text>
</comment>
<comment type="subcellular location">
    <subcellularLocation>
        <location evidence="1">Cell membrane</location>
        <topology evidence="1">Peripheral membrane protein</topology>
    </subcellularLocation>
</comment>
<comment type="similarity">
    <text evidence="1">Belongs to the ATPase delta chain family.</text>
</comment>
<dbReference type="EMBL" id="BA000034">
    <property type="protein sequence ID" value="BAC64453.1"/>
    <property type="molecule type" value="Genomic_DNA"/>
</dbReference>
<dbReference type="RefSeq" id="WP_011106839.1">
    <property type="nucleotide sequence ID" value="NC_004606.1"/>
</dbReference>
<dbReference type="SMR" id="P0CZ95"/>
<dbReference type="KEGG" id="sps:SPs1358"/>
<dbReference type="HOGENOM" id="CLU_085114_1_2_9"/>
<dbReference type="GO" id="GO:0005886">
    <property type="term" value="C:plasma membrane"/>
    <property type="evidence" value="ECO:0007669"/>
    <property type="project" value="UniProtKB-SubCell"/>
</dbReference>
<dbReference type="GO" id="GO:0045259">
    <property type="term" value="C:proton-transporting ATP synthase complex"/>
    <property type="evidence" value="ECO:0007669"/>
    <property type="project" value="UniProtKB-KW"/>
</dbReference>
<dbReference type="GO" id="GO:0046933">
    <property type="term" value="F:proton-transporting ATP synthase activity, rotational mechanism"/>
    <property type="evidence" value="ECO:0007669"/>
    <property type="project" value="UniProtKB-UniRule"/>
</dbReference>
<dbReference type="Gene3D" id="1.10.520.20">
    <property type="entry name" value="N-terminal domain of the delta subunit of the F1F0-ATP synthase"/>
    <property type="match status" value="1"/>
</dbReference>
<dbReference type="HAMAP" id="MF_01416">
    <property type="entry name" value="ATP_synth_delta_bact"/>
    <property type="match status" value="1"/>
</dbReference>
<dbReference type="InterPro" id="IPR026015">
    <property type="entry name" value="ATP_synth_OSCP/delta_N_sf"/>
</dbReference>
<dbReference type="InterPro" id="IPR000711">
    <property type="entry name" value="ATPase_OSCP/dsu"/>
</dbReference>
<dbReference type="NCBIfam" id="TIGR01145">
    <property type="entry name" value="ATP_synt_delta"/>
    <property type="match status" value="1"/>
</dbReference>
<dbReference type="NCBIfam" id="NF004401">
    <property type="entry name" value="PRK05758.2-1"/>
    <property type="match status" value="1"/>
</dbReference>
<dbReference type="PANTHER" id="PTHR11910">
    <property type="entry name" value="ATP SYNTHASE DELTA CHAIN"/>
    <property type="match status" value="1"/>
</dbReference>
<dbReference type="Pfam" id="PF00213">
    <property type="entry name" value="OSCP"/>
    <property type="match status" value="1"/>
</dbReference>
<dbReference type="PRINTS" id="PR00125">
    <property type="entry name" value="ATPASEDELTA"/>
</dbReference>
<dbReference type="SUPFAM" id="SSF47928">
    <property type="entry name" value="N-terminal domain of the delta subunit of the F1F0-ATP synthase"/>
    <property type="match status" value="1"/>
</dbReference>
<name>ATPD_STRPQ</name>
<gene>
    <name evidence="1" type="primary">atpH</name>
    <name type="ordered locus">SPs1358</name>
</gene>
<organism>
    <name type="scientific">Streptococcus pyogenes serotype M3 (strain SSI-1)</name>
    <dbReference type="NCBI Taxonomy" id="193567"/>
    <lineage>
        <taxon>Bacteria</taxon>
        <taxon>Bacillati</taxon>
        <taxon>Bacillota</taxon>
        <taxon>Bacilli</taxon>
        <taxon>Lactobacillales</taxon>
        <taxon>Streptococcaceae</taxon>
        <taxon>Streptococcus</taxon>
    </lineage>
</organism>
<reference key="1">
    <citation type="journal article" date="2003" name="Genome Res.">
        <title>Genome sequence of an M3 strain of Streptococcus pyogenes reveals a large-scale genomic rearrangement in invasive strains and new insights into phage evolution.</title>
        <authorList>
            <person name="Nakagawa I."/>
            <person name="Kurokawa K."/>
            <person name="Yamashita A."/>
            <person name="Nakata M."/>
            <person name="Tomiyasu Y."/>
            <person name="Okahashi N."/>
            <person name="Kawabata S."/>
            <person name="Yamazaki K."/>
            <person name="Shiba T."/>
            <person name="Yasunaga T."/>
            <person name="Hayashi H."/>
            <person name="Hattori M."/>
            <person name="Hamada S."/>
        </authorList>
    </citation>
    <scope>NUCLEOTIDE SEQUENCE [LARGE SCALE GENOMIC DNA]</scope>
    <source>
        <strain>SSI-1</strain>
    </source>
</reference>
<proteinExistence type="inferred from homology"/>